<feature type="chain" id="PRO_1000197748" description="Putative membrane protein insertion efficiency factor">
    <location>
        <begin position="1"/>
        <end position="69"/>
    </location>
</feature>
<evidence type="ECO:0000255" key="1">
    <source>
        <dbReference type="HAMAP-Rule" id="MF_00386"/>
    </source>
</evidence>
<comment type="function">
    <text evidence="1">Could be involved in insertion of integral membrane proteins into the membrane.</text>
</comment>
<comment type="subcellular location">
    <subcellularLocation>
        <location evidence="1">Cell membrane</location>
        <topology evidence="1">Peripheral membrane protein</topology>
        <orientation evidence="1">Cytoplasmic side</orientation>
    </subcellularLocation>
</comment>
<comment type="similarity">
    <text evidence="1">Belongs to the UPF0161 family.</text>
</comment>
<organism>
    <name type="scientific">Clostridium kluyveri (strain NBRC 12016)</name>
    <dbReference type="NCBI Taxonomy" id="583346"/>
    <lineage>
        <taxon>Bacteria</taxon>
        <taxon>Bacillati</taxon>
        <taxon>Bacillota</taxon>
        <taxon>Clostridia</taxon>
        <taxon>Eubacteriales</taxon>
        <taxon>Clostridiaceae</taxon>
        <taxon>Clostridium</taxon>
    </lineage>
</organism>
<keyword id="KW-1003">Cell membrane</keyword>
<keyword id="KW-0472">Membrane</keyword>
<sequence>MKKFLIFLIKVYRKYISPLKVPCCRFYPTCSQYVLEALQKHGIIKGGFMSIKRILRCNPFCKGGYDPVK</sequence>
<protein>
    <recommendedName>
        <fullName evidence="1">Putative membrane protein insertion efficiency factor</fullName>
    </recommendedName>
</protein>
<proteinExistence type="inferred from homology"/>
<dbReference type="EMBL" id="AP009049">
    <property type="protein sequence ID" value="BAH08517.1"/>
    <property type="molecule type" value="Genomic_DNA"/>
</dbReference>
<dbReference type="RefSeq" id="WP_012104237.1">
    <property type="nucleotide sequence ID" value="NC_011837.1"/>
</dbReference>
<dbReference type="KEGG" id="ckr:CKR_3466"/>
<dbReference type="HOGENOM" id="CLU_144811_6_0_9"/>
<dbReference type="Proteomes" id="UP000007969">
    <property type="component" value="Chromosome"/>
</dbReference>
<dbReference type="GO" id="GO:0005886">
    <property type="term" value="C:plasma membrane"/>
    <property type="evidence" value="ECO:0007669"/>
    <property type="project" value="UniProtKB-SubCell"/>
</dbReference>
<dbReference type="HAMAP" id="MF_00386">
    <property type="entry name" value="UPF0161_YidD"/>
    <property type="match status" value="1"/>
</dbReference>
<dbReference type="InterPro" id="IPR002696">
    <property type="entry name" value="Membr_insert_effic_factor_YidD"/>
</dbReference>
<dbReference type="NCBIfam" id="TIGR00278">
    <property type="entry name" value="membrane protein insertion efficiency factor YidD"/>
    <property type="match status" value="1"/>
</dbReference>
<dbReference type="PANTHER" id="PTHR33383">
    <property type="entry name" value="MEMBRANE PROTEIN INSERTION EFFICIENCY FACTOR-RELATED"/>
    <property type="match status" value="1"/>
</dbReference>
<dbReference type="PANTHER" id="PTHR33383:SF1">
    <property type="entry name" value="MEMBRANE PROTEIN INSERTION EFFICIENCY FACTOR-RELATED"/>
    <property type="match status" value="1"/>
</dbReference>
<dbReference type="Pfam" id="PF01809">
    <property type="entry name" value="YidD"/>
    <property type="match status" value="1"/>
</dbReference>
<dbReference type="SMART" id="SM01234">
    <property type="entry name" value="Haemolytic"/>
    <property type="match status" value="1"/>
</dbReference>
<accession>B9DXS4</accession>
<gene>
    <name type="ordered locus">CKR_3466</name>
</gene>
<name>YIDD_CLOK1</name>
<reference key="1">
    <citation type="submission" date="2005-09" db="EMBL/GenBank/DDBJ databases">
        <title>Complete genome sequence of Clostridium kluyveri and comparative genomics of Clostridia species.</title>
        <authorList>
            <person name="Inui M."/>
            <person name="Nonaka H."/>
            <person name="Shinoda Y."/>
            <person name="Ikenaga Y."/>
            <person name="Abe M."/>
            <person name="Naito K."/>
            <person name="Vertes A.A."/>
            <person name="Yukawa H."/>
        </authorList>
    </citation>
    <scope>NUCLEOTIDE SEQUENCE [LARGE SCALE GENOMIC DNA]</scope>
    <source>
        <strain>NBRC 12016</strain>
    </source>
</reference>